<dbReference type="EMBL" id="DQ139894">
    <property type="protein sequence ID" value="AAZ75600.1"/>
    <property type="molecule type" value="mRNA"/>
</dbReference>
<dbReference type="SMR" id="Q2XXQ1"/>
<dbReference type="GO" id="GO:0005576">
    <property type="term" value="C:extracellular region"/>
    <property type="evidence" value="ECO:0007669"/>
    <property type="project" value="UniProtKB-SubCell"/>
</dbReference>
<dbReference type="GO" id="GO:0005246">
    <property type="term" value="F:calcium channel regulator activity"/>
    <property type="evidence" value="ECO:0007669"/>
    <property type="project" value="UniProtKB-KW"/>
</dbReference>
<dbReference type="GO" id="GO:0090729">
    <property type="term" value="F:toxin activity"/>
    <property type="evidence" value="ECO:0007669"/>
    <property type="project" value="UniProtKB-KW"/>
</dbReference>
<dbReference type="CDD" id="cd05383">
    <property type="entry name" value="CAP_CRISP"/>
    <property type="match status" value="1"/>
</dbReference>
<dbReference type="FunFam" id="3.40.33.10:FF:000005">
    <property type="entry name" value="Cysteine-rich secretory protein 2"/>
    <property type="match status" value="1"/>
</dbReference>
<dbReference type="Gene3D" id="3.40.33.10">
    <property type="entry name" value="CAP"/>
    <property type="match status" value="1"/>
</dbReference>
<dbReference type="InterPro" id="IPR018244">
    <property type="entry name" value="Allrgn_V5/Tpx1_CS"/>
</dbReference>
<dbReference type="InterPro" id="IPR014044">
    <property type="entry name" value="CAP_dom"/>
</dbReference>
<dbReference type="InterPro" id="IPR035940">
    <property type="entry name" value="CAP_sf"/>
</dbReference>
<dbReference type="InterPro" id="IPR001283">
    <property type="entry name" value="CRISP-related"/>
</dbReference>
<dbReference type="InterPro" id="IPR013871">
    <property type="entry name" value="Cysteine_rich_secretory"/>
</dbReference>
<dbReference type="InterPro" id="IPR034117">
    <property type="entry name" value="SCP_CRISP"/>
</dbReference>
<dbReference type="InterPro" id="IPR003582">
    <property type="entry name" value="ShKT_dom"/>
</dbReference>
<dbReference type="PANTHER" id="PTHR10334">
    <property type="entry name" value="CYSTEINE-RICH SECRETORY PROTEIN-RELATED"/>
    <property type="match status" value="1"/>
</dbReference>
<dbReference type="Pfam" id="PF00188">
    <property type="entry name" value="CAP"/>
    <property type="match status" value="1"/>
</dbReference>
<dbReference type="Pfam" id="PF08562">
    <property type="entry name" value="Crisp"/>
    <property type="match status" value="1"/>
</dbReference>
<dbReference type="PRINTS" id="PR00837">
    <property type="entry name" value="V5TPXLIKE"/>
</dbReference>
<dbReference type="SMART" id="SM00198">
    <property type="entry name" value="SCP"/>
    <property type="match status" value="1"/>
</dbReference>
<dbReference type="SUPFAM" id="SSF57546">
    <property type="entry name" value="Crisp domain-like"/>
    <property type="match status" value="1"/>
</dbReference>
<dbReference type="SUPFAM" id="SSF55797">
    <property type="entry name" value="PR-1-like"/>
    <property type="match status" value="1"/>
</dbReference>
<dbReference type="PROSITE" id="PS01009">
    <property type="entry name" value="CRISP_1"/>
    <property type="match status" value="1"/>
</dbReference>
<dbReference type="PROSITE" id="PS01010">
    <property type="entry name" value="CRISP_2"/>
    <property type="match status" value="1"/>
</dbReference>
<dbReference type="PROSITE" id="PS51670">
    <property type="entry name" value="SHKT"/>
    <property type="match status" value="1"/>
</dbReference>
<reference key="1">
    <citation type="journal article" date="2006" name="Nature">
        <title>Early evolution of the venom system in lizards and snakes.</title>
        <authorList>
            <person name="Fry B.G."/>
            <person name="Vidal N."/>
            <person name="Norman J.A."/>
            <person name="Vonk F.J."/>
            <person name="Scheib H."/>
            <person name="Ramjan S.F.R."/>
            <person name="Kuruppu S."/>
            <person name="Fung K."/>
            <person name="Blair Hedges S."/>
            <person name="Richardson M.K."/>
            <person name="Hodgson W.C."/>
            <person name="Ignjatovic V."/>
            <person name="Summerhayes R."/>
            <person name="Kochva E."/>
        </authorList>
    </citation>
    <scope>NUCLEOTIDE SEQUENCE [LARGE SCALE MRNA]</scope>
    <source>
        <tissue>Venom gland</tissue>
    </source>
</reference>
<reference key="2">
    <citation type="journal article" date="2013" name="Proc. Natl. Acad. Sci. U.S.A.">
        <title>The king cobra genome reveals dynamic gene evolution and adaptation in the snake venom system.</title>
        <authorList>
            <person name="Vonk F.J."/>
            <person name="Casewell N.R."/>
            <person name="Henkel C.V."/>
            <person name="Heimberg A.M."/>
            <person name="Jansen H.J."/>
            <person name="McCleary R.J."/>
            <person name="Kerkkamp H.M."/>
            <person name="Vos R.A."/>
            <person name="Guerreiro I."/>
            <person name="Calvete J.J."/>
            <person name="Wuster W."/>
            <person name="Woods A.E."/>
            <person name="Logan J.M."/>
            <person name="Harrison R.A."/>
            <person name="Castoe T.A."/>
            <person name="de Koning A.P."/>
            <person name="Pollock D.D."/>
            <person name="Yandell M."/>
            <person name="Calderon D."/>
            <person name="Renjifo C."/>
            <person name="Currier R.B."/>
            <person name="Salgado D."/>
            <person name="Pla D."/>
            <person name="Sanz L."/>
            <person name="Hyder A.S."/>
            <person name="Ribeiro J.M."/>
            <person name="Arntzen J.W."/>
            <person name="van den Thillart G.E."/>
            <person name="Boetzer M."/>
            <person name="Pirovano W."/>
            <person name="Dirks R.P."/>
            <person name="Spaink H.P."/>
            <person name="Duboule D."/>
            <person name="McGlinn E."/>
            <person name="Kini R.M."/>
            <person name="Richardson M.K."/>
        </authorList>
    </citation>
    <scope>IDENTIFICATION BY MASS SPECTROMETRY</scope>
    <source>
        <tissue>Venom</tissue>
    </source>
</reference>
<name>CRVP_LEIMD</name>
<feature type="signal peptide" evidence="1">
    <location>
        <begin position="1"/>
        <end position="18"/>
    </location>
</feature>
<feature type="chain" id="PRO_0000380645" description="Cysteine-rich venom protein LEI1">
    <location>
        <begin position="19"/>
        <end position="214" status="greater than"/>
    </location>
</feature>
<feature type="domain" description="SCP">
    <location>
        <begin position="37"/>
        <end position="165"/>
    </location>
</feature>
<feature type="domain" description="ShKT" evidence="2">
    <location>
        <begin position="201"/>
        <end position="214"/>
    </location>
</feature>
<feature type="disulfide bond" evidence="2">
    <location>
        <begin position="74"/>
        <end position="152"/>
    </location>
</feature>
<feature type="disulfide bond" evidence="2">
    <location>
        <begin position="91"/>
        <end position="166"/>
    </location>
</feature>
<feature type="disulfide bond" evidence="2">
    <location>
        <begin position="147"/>
        <end position="163"/>
    </location>
</feature>
<feature type="disulfide bond" evidence="2">
    <location>
        <begin position="185"/>
        <end position="192"/>
    </location>
</feature>
<feature type="disulfide bond" evidence="2">
    <location>
        <begin position="188"/>
        <end position="197"/>
    </location>
</feature>
<feature type="non-terminal residue">
    <location>
        <position position="214"/>
    </location>
</feature>
<sequence>MIAFILLSLAAVLQQSFGTVDFDSESPRRPEKQREIVNMHNSLRRSVSPTASNMLKMEWYPEAASNAERWAYNCITGHSSNPSRVIDGIQCGENIYMSPVPITWTEIIQIWYDENKNFVYGVGANPPGSMIGHYTQIVWYKSYRIGCAAVYCPSTYYSYFYVCQYCPTGNFNGLYATPYKSGPPCGDCPSACVKGLCTNPCTVENKFTNCNTLV</sequence>
<organism>
    <name type="scientific">Leioheterodon madagascariensis</name>
    <name type="common">Malagasy giant hognose snake</name>
    <name type="synonym">Heterodon madagascariensis</name>
    <dbReference type="NCBI Taxonomy" id="46577"/>
    <lineage>
        <taxon>Eukaryota</taxon>
        <taxon>Metazoa</taxon>
        <taxon>Chordata</taxon>
        <taxon>Craniata</taxon>
        <taxon>Vertebrata</taxon>
        <taxon>Euteleostomi</taxon>
        <taxon>Lepidosauria</taxon>
        <taxon>Squamata</taxon>
        <taxon>Bifurcata</taxon>
        <taxon>Unidentata</taxon>
        <taxon>Episquamata</taxon>
        <taxon>Toxicofera</taxon>
        <taxon>Serpentes</taxon>
        <taxon>Colubroidea</taxon>
        <taxon>Lamprophiidae</taxon>
        <taxon>Pseudoxyrhophiinae</taxon>
        <taxon>Leioheterodon</taxon>
    </lineage>
</organism>
<comment type="function">
    <text evidence="1">Blocks contraction of smooth muscle elicited by high potassium-induced depolarization, but does not block caffeine-stimulated contraction. May target voltage-gated calcium channels on smooth muscle (By similarity).</text>
</comment>
<comment type="subcellular location">
    <subcellularLocation>
        <location evidence="1">Secreted</location>
    </subcellularLocation>
</comment>
<comment type="tissue specificity">
    <text>Expressed by the venom gland.</text>
</comment>
<comment type="similarity">
    <text evidence="3">Belongs to the CRISP family.</text>
</comment>
<accession>Q2XXQ1</accession>
<protein>
    <recommendedName>
        <fullName>Cysteine-rich venom protein LEI1</fullName>
        <shortName>CRVP</shortName>
    </recommendedName>
    <alternativeName>
        <fullName>Cysteine-rich secretory protein LEI1</fullName>
        <shortName>CRISP-LEI1</shortName>
    </alternativeName>
</protein>
<keyword id="KW-0108">Calcium channel impairing toxin</keyword>
<keyword id="KW-1015">Disulfide bond</keyword>
<keyword id="KW-0872">Ion channel impairing toxin</keyword>
<keyword id="KW-0528">Neurotoxin</keyword>
<keyword id="KW-0964">Secreted</keyword>
<keyword id="KW-0732">Signal</keyword>
<keyword id="KW-0800">Toxin</keyword>
<evidence type="ECO:0000250" key="1"/>
<evidence type="ECO:0000255" key="2">
    <source>
        <dbReference type="PROSITE-ProRule" id="PRU01005"/>
    </source>
</evidence>
<evidence type="ECO:0000305" key="3"/>
<proteinExistence type="evidence at protein level"/>